<accession>Q4L7H9</accession>
<name>RECX_STAHJ</name>
<proteinExistence type="inferred from homology"/>
<keyword id="KW-0963">Cytoplasm</keyword>
<evidence type="ECO:0000255" key="1">
    <source>
        <dbReference type="HAMAP-Rule" id="MF_01114"/>
    </source>
</evidence>
<organism>
    <name type="scientific">Staphylococcus haemolyticus (strain JCSC1435)</name>
    <dbReference type="NCBI Taxonomy" id="279808"/>
    <lineage>
        <taxon>Bacteria</taxon>
        <taxon>Bacillati</taxon>
        <taxon>Bacillota</taxon>
        <taxon>Bacilli</taxon>
        <taxon>Bacillales</taxon>
        <taxon>Staphylococcaceae</taxon>
        <taxon>Staphylococcus</taxon>
    </lineage>
</organism>
<dbReference type="EMBL" id="AP006716">
    <property type="protein sequence ID" value="BAE04396.1"/>
    <property type="molecule type" value="Genomic_DNA"/>
</dbReference>
<dbReference type="RefSeq" id="WP_011275390.1">
    <property type="nucleotide sequence ID" value="NC_007168.1"/>
</dbReference>
<dbReference type="SMR" id="Q4L7H9"/>
<dbReference type="KEGG" id="sha:SH1087"/>
<dbReference type="eggNOG" id="COG2137">
    <property type="taxonomic scope" value="Bacteria"/>
</dbReference>
<dbReference type="HOGENOM" id="CLU_066607_4_0_9"/>
<dbReference type="OrthoDB" id="5421057at2"/>
<dbReference type="Proteomes" id="UP000000543">
    <property type="component" value="Chromosome"/>
</dbReference>
<dbReference type="GO" id="GO:0005737">
    <property type="term" value="C:cytoplasm"/>
    <property type="evidence" value="ECO:0007669"/>
    <property type="project" value="UniProtKB-SubCell"/>
</dbReference>
<dbReference type="GO" id="GO:0006282">
    <property type="term" value="P:regulation of DNA repair"/>
    <property type="evidence" value="ECO:0007669"/>
    <property type="project" value="UniProtKB-UniRule"/>
</dbReference>
<dbReference type="Gene3D" id="1.10.10.10">
    <property type="entry name" value="Winged helix-like DNA-binding domain superfamily/Winged helix DNA-binding domain"/>
    <property type="match status" value="4"/>
</dbReference>
<dbReference type="HAMAP" id="MF_01114">
    <property type="entry name" value="RecX"/>
    <property type="match status" value="1"/>
</dbReference>
<dbReference type="InterPro" id="IPR053926">
    <property type="entry name" value="RecX_HTH_1st"/>
</dbReference>
<dbReference type="InterPro" id="IPR053925">
    <property type="entry name" value="RecX_HTH_3rd"/>
</dbReference>
<dbReference type="InterPro" id="IPR003783">
    <property type="entry name" value="Regulatory_RecX"/>
</dbReference>
<dbReference type="InterPro" id="IPR036388">
    <property type="entry name" value="WH-like_DNA-bd_sf"/>
</dbReference>
<dbReference type="NCBIfam" id="NF010733">
    <property type="entry name" value="PRK14135.1"/>
    <property type="match status" value="1"/>
</dbReference>
<dbReference type="PANTHER" id="PTHR33602">
    <property type="entry name" value="REGULATORY PROTEIN RECX FAMILY PROTEIN"/>
    <property type="match status" value="1"/>
</dbReference>
<dbReference type="PANTHER" id="PTHR33602:SF1">
    <property type="entry name" value="REGULATORY PROTEIN RECX FAMILY PROTEIN"/>
    <property type="match status" value="1"/>
</dbReference>
<dbReference type="Pfam" id="PF21982">
    <property type="entry name" value="RecX_HTH1"/>
    <property type="match status" value="1"/>
</dbReference>
<dbReference type="Pfam" id="PF21981">
    <property type="entry name" value="RecX_HTH3"/>
    <property type="match status" value="1"/>
</dbReference>
<comment type="function">
    <text evidence="1">Modulates RecA activity.</text>
</comment>
<comment type="subcellular location">
    <subcellularLocation>
        <location evidence="1">Cytoplasm</location>
    </subcellularLocation>
</comment>
<comment type="similarity">
    <text evidence="1">Belongs to the RecX family.</text>
</comment>
<sequence length="267" mass="31717">MTKITKIEVQKNNKERFNLFLDEVFEMGIDIDTLVRFNLKKGQILEPSDMENIQKYEHYRLGINMAIQYLSYKKRTEKEVRQHLQQNEISDIAIQQVIDYCYRESYINHEDYAESLKNTMINTTDKGPEIFRQKLYQVGIEPNIINTYVPIYEEEQSFEAVIEVAKKIMKTKKGPEIKIRQKVLQSLIQKGYSMDVVQQAIAELNFEQDENILDDLLQKDLEKVYTKQRRKYDGQQLVMKTIESLMRKGYKYDKIKSKLEESGILDE</sequence>
<reference key="1">
    <citation type="journal article" date="2005" name="J. Bacteriol.">
        <title>Whole-genome sequencing of Staphylococcus haemolyticus uncovers the extreme plasticity of its genome and the evolution of human-colonizing staphylococcal species.</title>
        <authorList>
            <person name="Takeuchi F."/>
            <person name="Watanabe S."/>
            <person name="Baba T."/>
            <person name="Yuzawa H."/>
            <person name="Ito T."/>
            <person name="Morimoto Y."/>
            <person name="Kuroda M."/>
            <person name="Cui L."/>
            <person name="Takahashi M."/>
            <person name="Ankai A."/>
            <person name="Baba S."/>
            <person name="Fukui S."/>
            <person name="Lee J.C."/>
            <person name="Hiramatsu K."/>
        </authorList>
    </citation>
    <scope>NUCLEOTIDE SEQUENCE [LARGE SCALE GENOMIC DNA]</scope>
    <source>
        <strain>JCSC1435</strain>
    </source>
</reference>
<feature type="chain" id="PRO_1000065211" description="Regulatory protein RecX">
    <location>
        <begin position="1"/>
        <end position="267"/>
    </location>
</feature>
<gene>
    <name evidence="1" type="primary">recX</name>
    <name type="ordered locus">SH1087</name>
</gene>
<protein>
    <recommendedName>
        <fullName evidence="1">Regulatory protein RecX</fullName>
    </recommendedName>
</protein>